<feature type="chain" id="PRO_1000069779" description="7-cyano-7-deazaguanine synthase">
    <location>
        <begin position="1"/>
        <end position="233"/>
    </location>
</feature>
<feature type="binding site" evidence="1">
    <location>
        <begin position="7"/>
        <end position="17"/>
    </location>
    <ligand>
        <name>ATP</name>
        <dbReference type="ChEBI" id="CHEBI:30616"/>
    </ligand>
</feature>
<feature type="binding site" evidence="1">
    <location>
        <position position="195"/>
    </location>
    <ligand>
        <name>Zn(2+)</name>
        <dbReference type="ChEBI" id="CHEBI:29105"/>
    </ligand>
</feature>
<feature type="binding site" evidence="1">
    <location>
        <position position="206"/>
    </location>
    <ligand>
        <name>Zn(2+)</name>
        <dbReference type="ChEBI" id="CHEBI:29105"/>
    </ligand>
</feature>
<feature type="binding site" evidence="1">
    <location>
        <position position="209"/>
    </location>
    <ligand>
        <name>Zn(2+)</name>
        <dbReference type="ChEBI" id="CHEBI:29105"/>
    </ligand>
</feature>
<feature type="binding site" evidence="1">
    <location>
        <position position="212"/>
    </location>
    <ligand>
        <name>Zn(2+)</name>
        <dbReference type="ChEBI" id="CHEBI:29105"/>
    </ligand>
</feature>
<dbReference type="EC" id="6.3.4.20" evidence="1"/>
<dbReference type="EMBL" id="CP000609">
    <property type="protein sequence ID" value="ABO35767.1"/>
    <property type="molecule type" value="Genomic_DNA"/>
</dbReference>
<dbReference type="RefSeq" id="WP_011869217.1">
    <property type="nucleotide sequence ID" value="NC_009135.1"/>
</dbReference>
<dbReference type="SMR" id="A4FZY3"/>
<dbReference type="STRING" id="402880.MmarC5_1470"/>
<dbReference type="GeneID" id="4927655"/>
<dbReference type="KEGG" id="mmq:MmarC5_1470"/>
<dbReference type="eggNOG" id="arCOG00039">
    <property type="taxonomic scope" value="Archaea"/>
</dbReference>
<dbReference type="HOGENOM" id="CLU_081854_1_1_2"/>
<dbReference type="OrthoDB" id="6532at2157"/>
<dbReference type="UniPathway" id="UPA00391"/>
<dbReference type="Proteomes" id="UP000000253">
    <property type="component" value="Chromosome"/>
</dbReference>
<dbReference type="GO" id="GO:0005524">
    <property type="term" value="F:ATP binding"/>
    <property type="evidence" value="ECO:0007669"/>
    <property type="project" value="UniProtKB-UniRule"/>
</dbReference>
<dbReference type="GO" id="GO:0016879">
    <property type="term" value="F:ligase activity, forming carbon-nitrogen bonds"/>
    <property type="evidence" value="ECO:0007669"/>
    <property type="project" value="UniProtKB-UniRule"/>
</dbReference>
<dbReference type="GO" id="GO:0008270">
    <property type="term" value="F:zinc ion binding"/>
    <property type="evidence" value="ECO:0007669"/>
    <property type="project" value="UniProtKB-UniRule"/>
</dbReference>
<dbReference type="CDD" id="cd01995">
    <property type="entry name" value="QueC-like"/>
    <property type="match status" value="1"/>
</dbReference>
<dbReference type="Gene3D" id="3.40.50.620">
    <property type="entry name" value="HUPs"/>
    <property type="match status" value="1"/>
</dbReference>
<dbReference type="HAMAP" id="MF_01633">
    <property type="entry name" value="QueC"/>
    <property type="match status" value="1"/>
</dbReference>
<dbReference type="InterPro" id="IPR018317">
    <property type="entry name" value="QueC"/>
</dbReference>
<dbReference type="InterPro" id="IPR014729">
    <property type="entry name" value="Rossmann-like_a/b/a_fold"/>
</dbReference>
<dbReference type="NCBIfam" id="TIGR00364">
    <property type="entry name" value="7-cyano-7-deazaguanine synthase QueC"/>
    <property type="match status" value="1"/>
</dbReference>
<dbReference type="PANTHER" id="PTHR42914">
    <property type="entry name" value="7-CYANO-7-DEAZAGUANINE SYNTHASE"/>
    <property type="match status" value="1"/>
</dbReference>
<dbReference type="PANTHER" id="PTHR42914:SF1">
    <property type="entry name" value="7-CYANO-7-DEAZAGUANINE SYNTHASE"/>
    <property type="match status" value="1"/>
</dbReference>
<dbReference type="Pfam" id="PF06508">
    <property type="entry name" value="QueC"/>
    <property type="match status" value="1"/>
</dbReference>
<dbReference type="PIRSF" id="PIRSF006293">
    <property type="entry name" value="ExsB"/>
    <property type="match status" value="1"/>
</dbReference>
<dbReference type="SUPFAM" id="SSF52402">
    <property type="entry name" value="Adenine nucleotide alpha hydrolases-like"/>
    <property type="match status" value="1"/>
</dbReference>
<gene>
    <name evidence="1" type="primary">queC</name>
    <name type="ordered locus">MmarC5_1470</name>
</gene>
<keyword id="KW-0067">ATP-binding</keyword>
<keyword id="KW-0436">Ligase</keyword>
<keyword id="KW-0479">Metal-binding</keyword>
<keyword id="KW-0547">Nucleotide-binding</keyword>
<keyword id="KW-0862">Zinc</keyword>
<accession>A4FZY3</accession>
<reference key="1">
    <citation type="submission" date="2007-03" db="EMBL/GenBank/DDBJ databases">
        <title>Complete sequence of chromosome of Methanococcus maripaludis C5.</title>
        <authorList>
            <consortium name="US DOE Joint Genome Institute"/>
            <person name="Copeland A."/>
            <person name="Lucas S."/>
            <person name="Lapidus A."/>
            <person name="Barry K."/>
            <person name="Glavina del Rio T."/>
            <person name="Dalin E."/>
            <person name="Tice H."/>
            <person name="Pitluck S."/>
            <person name="Chertkov O."/>
            <person name="Brettin T."/>
            <person name="Bruce D."/>
            <person name="Han C."/>
            <person name="Detter J.C."/>
            <person name="Schmutz J."/>
            <person name="Larimer F."/>
            <person name="Land M."/>
            <person name="Hauser L."/>
            <person name="Kyrpides N."/>
            <person name="Mikhailova N."/>
            <person name="Sieprawska-Lupa M."/>
            <person name="Whitman W.B."/>
            <person name="Richardson P."/>
        </authorList>
    </citation>
    <scope>NUCLEOTIDE SEQUENCE [LARGE SCALE GENOMIC DNA]</scope>
    <source>
        <strain>C5 / ATCC BAA-1333</strain>
    </source>
</reference>
<organism>
    <name type="scientific">Methanococcus maripaludis (strain C5 / ATCC BAA-1333)</name>
    <dbReference type="NCBI Taxonomy" id="402880"/>
    <lineage>
        <taxon>Archaea</taxon>
        <taxon>Methanobacteriati</taxon>
        <taxon>Methanobacteriota</taxon>
        <taxon>Methanomada group</taxon>
        <taxon>Methanococci</taxon>
        <taxon>Methanococcales</taxon>
        <taxon>Methanococcaceae</taxon>
        <taxon>Methanococcus</taxon>
    </lineage>
</organism>
<proteinExistence type="inferred from homology"/>
<evidence type="ECO:0000255" key="1">
    <source>
        <dbReference type="HAMAP-Rule" id="MF_01633"/>
    </source>
</evidence>
<protein>
    <recommendedName>
        <fullName evidence="1">7-cyano-7-deazaguanine synthase</fullName>
        <ecNumber evidence="1">6.3.4.20</ecNumber>
    </recommendedName>
    <alternativeName>
        <fullName evidence="1">7-cyano-7-carbaguanine synthase</fullName>
    </alternativeName>
    <alternativeName>
        <fullName evidence="1">Archaeosine biosynthesis protein QueC</fullName>
    </alternativeName>
    <alternativeName>
        <fullName evidence="1">PreQ(0) synthase</fullName>
    </alternativeName>
</protein>
<comment type="function">
    <text evidence="1">Catalyzes the ATP-dependent conversion of 7-carboxy-7-deazaguanine (CDG) to 7-cyano-7-deazaguanine (preQ(0)).</text>
</comment>
<comment type="catalytic activity">
    <reaction evidence="1">
        <text>7-carboxy-7-deazaguanine + NH4(+) + ATP = 7-cyano-7-deazaguanine + ADP + phosphate + H2O + H(+)</text>
        <dbReference type="Rhea" id="RHEA:27982"/>
        <dbReference type="ChEBI" id="CHEBI:15377"/>
        <dbReference type="ChEBI" id="CHEBI:15378"/>
        <dbReference type="ChEBI" id="CHEBI:28938"/>
        <dbReference type="ChEBI" id="CHEBI:30616"/>
        <dbReference type="ChEBI" id="CHEBI:43474"/>
        <dbReference type="ChEBI" id="CHEBI:45075"/>
        <dbReference type="ChEBI" id="CHEBI:61036"/>
        <dbReference type="ChEBI" id="CHEBI:456216"/>
        <dbReference type="EC" id="6.3.4.20"/>
    </reaction>
</comment>
<comment type="cofactor">
    <cofactor evidence="1">
        <name>Zn(2+)</name>
        <dbReference type="ChEBI" id="CHEBI:29105"/>
    </cofactor>
    <text evidence="1">Binds 1 zinc ion per subunit.</text>
</comment>
<comment type="pathway">
    <text evidence="1">Purine metabolism; 7-cyano-7-deazaguanine biosynthesis.</text>
</comment>
<comment type="similarity">
    <text evidence="1">Belongs to the QueC family.</text>
</comment>
<sequence length="233" mass="26253">MKAICVLSGGLDSAVTSLVAKSENYDITTVTFNYGQMALNQEIKSAEKISEILNADHHVIDINFVKEFSKSGLNTGNIPEPEKEDLDDFEKSEKTMKAVWVPARNMIMFSIASGFAEGIDAEKIFSGLNREEGVTFPDNTPEFIERFNKSLEYGTLNKVKMVAPLYELNKPEIAKLGKELELKLDLEVIKYSYSCYRDNGEDYLHCGTCESCMRRKRAFKEAGIVDPTKYLVE</sequence>
<name>QUEC_METM5</name>